<organism>
    <name type="scientific">Tobacco rattle virus (strain PSG)</name>
    <dbReference type="NCBI Taxonomy" id="12297"/>
    <lineage>
        <taxon>Viruses</taxon>
        <taxon>Riboviria</taxon>
        <taxon>Orthornavirae</taxon>
        <taxon>Kitrinoviricota</taxon>
        <taxon>Alsuviricetes</taxon>
        <taxon>Martellivirales</taxon>
        <taxon>Virgaviridae</taxon>
        <taxon>Tobravirus</taxon>
        <taxon>Tobacco rattle virus</taxon>
    </lineage>
</organism>
<organismHost>
    <name type="scientific">Beta vulgaris</name>
    <name type="common">Sugar beet</name>
    <dbReference type="NCBI Taxonomy" id="161934"/>
</organismHost>
<organismHost>
    <name type="scientific">Capsicum annuum</name>
    <name type="common">Capsicum pepper</name>
    <dbReference type="NCBI Taxonomy" id="4072"/>
</organismHost>
<organismHost>
    <name type="scientific">Hyacinthus</name>
    <dbReference type="NCBI Taxonomy" id="82024"/>
</organismHost>
<organismHost>
    <name type="scientific">Narcissus pseudonarcissus</name>
    <name type="common">Daffodil</name>
    <dbReference type="NCBI Taxonomy" id="39639"/>
</organismHost>
<organismHost>
    <name type="scientific">Nicotiana tabacum</name>
    <name type="common">Common tobacco</name>
    <dbReference type="NCBI Taxonomy" id="4097"/>
</organismHost>
<organismHost>
    <name type="scientific">Solanum tuberosum</name>
    <name type="common">Potato</name>
    <dbReference type="NCBI Taxonomy" id="4113"/>
</organismHost>
<organismHost>
    <name type="scientific">Spinacia oleracea</name>
    <name type="common">Spinach</name>
    <dbReference type="NCBI Taxonomy" id="3562"/>
</organismHost>
<organismHost>
    <name type="scientific">Stellaria media</name>
    <name type="common">Common chickweed</name>
    <name type="synonym">Alsine media</name>
    <dbReference type="NCBI Taxonomy" id="13274"/>
</organismHost>
<organismHost>
    <name type="scientific">Tulipa</name>
    <dbReference type="NCBI Taxonomy" id="13305"/>
</organismHost>
<organismHost>
    <name type="scientific">Viola arvensis</name>
    <name type="common">European field pansy</name>
    <name type="synonym">Field violet</name>
    <dbReference type="NCBI Taxonomy" id="97415"/>
</organismHost>
<protein>
    <recommendedName>
        <fullName>16 kDa protein</fullName>
    </recommendedName>
</protein>
<proteinExistence type="predicted"/>
<accession>P05075</accession>
<dbReference type="EMBL" id="X03685">
    <property type="protein sequence ID" value="CAA27321.1"/>
    <property type="molecule type" value="Genomic_RNA"/>
</dbReference>
<dbReference type="PIR" id="A04186">
    <property type="entry name" value="WMBV6P"/>
</dbReference>
<dbReference type="SMR" id="P05075"/>
<dbReference type="InterPro" id="IPR007968">
    <property type="entry name" value="Tobacco_rattle_virus_16kDa"/>
</dbReference>
<dbReference type="Pfam" id="PF05304">
    <property type="entry name" value="DUF728"/>
    <property type="match status" value="1"/>
</dbReference>
<name>V16K_TRVPS</name>
<sequence>MTCVLKGCVNEVTVLGHETCSIGHANKLRKQVADMVGVTRRCAENNCGWFVCIIINDFTFDVYNCCGRSHLEKCRKRVEARNREIWKQIRRIQAESSSATRKKSHNSKNSKKKFKEDREFGAPKRFLRDDVPLGIDQLFVF</sequence>
<feature type="chain" id="PRO_0000222510" description="16 kDa protein">
    <location>
        <begin position="1"/>
        <end position="141"/>
    </location>
</feature>
<feature type="region of interest" description="Disordered" evidence="1">
    <location>
        <begin position="95"/>
        <end position="116"/>
    </location>
</feature>
<feature type="compositionally biased region" description="Basic residues" evidence="1">
    <location>
        <begin position="100"/>
        <end position="113"/>
    </location>
</feature>
<evidence type="ECO:0000256" key="1">
    <source>
        <dbReference type="SAM" id="MobiDB-lite"/>
    </source>
</evidence>
<reference key="1">
    <citation type="journal article" date="1986" name="Nucleic Acids Res.">
        <title>Analysis of the genome structure of tobacco rattle virus strain PSG.</title>
        <authorList>
            <person name="Cornelissen B.J.C."/>
            <person name="Linthorst H.J.M."/>
            <person name="Brederode F.T."/>
            <person name="Bol J.F."/>
        </authorList>
    </citation>
    <scope>NUCLEOTIDE SEQUENCE [GENOMIC RNA]</scope>
</reference>